<feature type="chain" id="PRO_0000372041" description="GTP cyclohydrolase MptA">
    <location>
        <begin position="1"/>
        <end position="279"/>
    </location>
</feature>
<feature type="site" description="May be catalytically important" evidence="1">
    <location>
        <position position="146"/>
    </location>
</feature>
<protein>
    <recommendedName>
        <fullName evidence="1">GTP cyclohydrolase MptA</fullName>
        <ecNumber evidence="1">3.5.4.39</ecNumber>
    </recommendedName>
    <alternativeName>
        <fullName evidence="1">GTP cyclohydrolase IV</fullName>
    </alternativeName>
</protein>
<organism>
    <name type="scientific">Korarchaeum cryptofilum (strain OPF8)</name>
    <dbReference type="NCBI Taxonomy" id="374847"/>
    <lineage>
        <taxon>Archaea</taxon>
        <taxon>Thermoproteota</taxon>
        <taxon>Candidatus Korarchaeia</taxon>
        <taxon>Candidatus Korarchaeales</taxon>
        <taxon>Candidatus Korarchaeaceae</taxon>
        <taxon>Candidatus Korarchaeum</taxon>
    </lineage>
</organism>
<comment type="function">
    <text evidence="1">Converts GTP to 7,8-dihydro-D-neopterin 2',3'-cyclic phosphate, the first intermediate in the biosynthesis of coenzyme methanopterin.</text>
</comment>
<comment type="catalytic activity">
    <reaction evidence="1">
        <text>GTP + H2O = 7,8-dihydroneopterin 2',3'-cyclic phosphate + formate + diphosphate + H(+)</text>
        <dbReference type="Rhea" id="RHEA:25860"/>
        <dbReference type="ChEBI" id="CHEBI:15377"/>
        <dbReference type="ChEBI" id="CHEBI:15378"/>
        <dbReference type="ChEBI" id="CHEBI:15740"/>
        <dbReference type="ChEBI" id="CHEBI:33019"/>
        <dbReference type="ChEBI" id="CHEBI:37565"/>
        <dbReference type="ChEBI" id="CHEBI:58854"/>
        <dbReference type="EC" id="3.5.4.39"/>
    </reaction>
</comment>
<comment type="cofactor">
    <cofactor evidence="1">
        <name>Fe(2+)</name>
        <dbReference type="ChEBI" id="CHEBI:29033"/>
    </cofactor>
    <text evidence="1">Binds 1 Fe(2+) ion per subunit.</text>
</comment>
<comment type="pathway">
    <text evidence="1">Cofactor biosynthesis; 5,6,7,8-tetrahydromethanopterin biosynthesis.</text>
</comment>
<comment type="subunit">
    <text evidence="1">Homodimer.</text>
</comment>
<comment type="similarity">
    <text evidence="1">Belongs to the GTP cyclohydrolase IV family.</text>
</comment>
<gene>
    <name evidence="1" type="primary">mptA</name>
    <name type="ordered locus">Kcr_0832</name>
</gene>
<sequence>MRLPEELLERARDIHSEAPSHRIKLDRVGSFGLKVPVEFKGFLLLAEADVWVSLPEGRRGVDLSRQVEAIYELSNPPKDPFSLCREAAISLLEKLNYADSSGVSIRFDAPLQDGESLKYYGVEISSIASDEIINKIRVEILGMTACPCTAELIRAYKSSEIAATHTQRSLGILEVSTKAEHPDPDKLASIIERAMSSPLRTYTKRPDEGGLVIRSLSNARLAEDVVREMIHLFLEEFGHLPEDTHILAAVRSMESVHMHDIYAERSFSLDEIRKEISSH</sequence>
<keyword id="KW-0378">Hydrolase</keyword>
<keyword id="KW-0408">Iron</keyword>
<keyword id="KW-0479">Metal-binding</keyword>
<keyword id="KW-1185">Reference proteome</keyword>
<accession>B1L550</accession>
<evidence type="ECO:0000255" key="1">
    <source>
        <dbReference type="HAMAP-Rule" id="MF_01527"/>
    </source>
</evidence>
<proteinExistence type="inferred from homology"/>
<dbReference type="EC" id="3.5.4.39" evidence="1"/>
<dbReference type="EMBL" id="CP000968">
    <property type="protein sequence ID" value="ACB07579.1"/>
    <property type="molecule type" value="Genomic_DNA"/>
</dbReference>
<dbReference type="RefSeq" id="WP_012309476.1">
    <property type="nucleotide sequence ID" value="NC_010482.1"/>
</dbReference>
<dbReference type="SMR" id="B1L550"/>
<dbReference type="STRING" id="374847.Kcr_0832"/>
<dbReference type="EnsemblBacteria" id="ACB07579">
    <property type="protein sequence ID" value="ACB07579"/>
    <property type="gene ID" value="Kcr_0832"/>
</dbReference>
<dbReference type="GeneID" id="6094110"/>
<dbReference type="KEGG" id="kcr:Kcr_0832"/>
<dbReference type="eggNOG" id="arCOG04301">
    <property type="taxonomic scope" value="Archaea"/>
</dbReference>
<dbReference type="HOGENOM" id="CLU_062816_1_0_2"/>
<dbReference type="InParanoid" id="B1L550"/>
<dbReference type="OrthoDB" id="53087at2157"/>
<dbReference type="PhylomeDB" id="B1L550"/>
<dbReference type="UniPathway" id="UPA00065"/>
<dbReference type="Proteomes" id="UP000001686">
    <property type="component" value="Chromosome"/>
</dbReference>
<dbReference type="GO" id="GO:0003933">
    <property type="term" value="F:GTP cyclohydrolase activity"/>
    <property type="evidence" value="ECO:0000318"/>
    <property type="project" value="GO_Central"/>
</dbReference>
<dbReference type="GO" id="GO:0003934">
    <property type="term" value="F:GTP cyclohydrolase I activity"/>
    <property type="evidence" value="ECO:0007669"/>
    <property type="project" value="InterPro"/>
</dbReference>
<dbReference type="GO" id="GO:0044682">
    <property type="term" value="F:GTP cyclohydrolase IV activity"/>
    <property type="evidence" value="ECO:0007669"/>
    <property type="project" value="UniProtKB-UniRule"/>
</dbReference>
<dbReference type="GO" id="GO:0005506">
    <property type="term" value="F:iron ion binding"/>
    <property type="evidence" value="ECO:0007669"/>
    <property type="project" value="UniProtKB-UniRule"/>
</dbReference>
<dbReference type="GO" id="GO:2001118">
    <property type="term" value="P:tetrahydromethanopterin biosynthetic process"/>
    <property type="evidence" value="ECO:0007669"/>
    <property type="project" value="UniProtKB-UniRule"/>
</dbReference>
<dbReference type="Gene3D" id="3.10.270.10">
    <property type="entry name" value="Urate Oxidase"/>
    <property type="match status" value="1"/>
</dbReference>
<dbReference type="HAMAP" id="MF_01527_A">
    <property type="entry name" value="GTP_cyclohydrol_A"/>
    <property type="match status" value="1"/>
</dbReference>
<dbReference type="InterPro" id="IPR003801">
    <property type="entry name" value="GTP_cyclohydrolase_FolE2/MptA"/>
</dbReference>
<dbReference type="InterPro" id="IPR022840">
    <property type="entry name" value="GTP_cyclohydrolase_MptA"/>
</dbReference>
<dbReference type="NCBIfam" id="TIGR00294">
    <property type="entry name" value="GTP cyclohydrolase MptA"/>
    <property type="match status" value="1"/>
</dbReference>
<dbReference type="PANTHER" id="PTHR36445">
    <property type="entry name" value="GTP CYCLOHYDROLASE MPTA"/>
    <property type="match status" value="1"/>
</dbReference>
<dbReference type="PANTHER" id="PTHR36445:SF1">
    <property type="entry name" value="GTP CYCLOHYDROLASE MPTA"/>
    <property type="match status" value="1"/>
</dbReference>
<dbReference type="Pfam" id="PF02649">
    <property type="entry name" value="GCHY-1"/>
    <property type="match status" value="1"/>
</dbReference>
<name>MPTA_KORCO</name>
<reference key="1">
    <citation type="journal article" date="2008" name="Proc. Natl. Acad. Sci. U.S.A.">
        <title>A korarchaeal genome reveals new insights into the evolution of the Archaea.</title>
        <authorList>
            <person name="Elkins J.G."/>
            <person name="Podar M."/>
            <person name="Graham D.E."/>
            <person name="Makarova K.S."/>
            <person name="Wolf Y."/>
            <person name="Randau L."/>
            <person name="Hedlund B.P."/>
            <person name="Brochier-Armanet C."/>
            <person name="Kunin V."/>
            <person name="Anderson I."/>
            <person name="Lapidus A."/>
            <person name="Goltsman E."/>
            <person name="Barry K."/>
            <person name="Koonin E.V."/>
            <person name="Hugenholtz P."/>
            <person name="Kyrpides N."/>
            <person name="Wanner G."/>
            <person name="Richardson P."/>
            <person name="Keller M."/>
            <person name="Stetter K.O."/>
        </authorList>
    </citation>
    <scope>NUCLEOTIDE SEQUENCE [LARGE SCALE GENOMIC DNA]</scope>
    <source>
        <strain>OPF8</strain>
    </source>
</reference>